<sequence>MADFHLIAPKGANRARRIVGRGSSSGRGTTSGRGTKGQQARAGHKAYVGFEGGQMPLYRRVPRRGFSNCAFKKEYAVVNVGALEFVYAPGETVNRQTLIEKGLVKGRVPFIKILADGELTKSIVVRVDRVSARAQEKIQQAGGSVECIEAQER</sequence>
<accession>O83237</accession>
<comment type="function">
    <text evidence="1">Binds to the 23S rRNA.</text>
</comment>
<comment type="subunit">
    <text evidence="1">Part of the 50S ribosomal subunit.</text>
</comment>
<comment type="similarity">
    <text evidence="1">Belongs to the universal ribosomal protein uL15 family.</text>
</comment>
<dbReference type="EMBL" id="AE000520">
    <property type="protein sequence ID" value="AAC65197.1"/>
    <property type="molecule type" value="Genomic_DNA"/>
</dbReference>
<dbReference type="PIR" id="E71351">
    <property type="entry name" value="E71351"/>
</dbReference>
<dbReference type="RefSeq" id="WP_010881655.1">
    <property type="nucleotide sequence ID" value="NC_021490.2"/>
</dbReference>
<dbReference type="SMR" id="O83237"/>
<dbReference type="IntAct" id="O83237">
    <property type="interactions" value="1"/>
</dbReference>
<dbReference type="STRING" id="243276.TP_0207"/>
<dbReference type="EnsemblBacteria" id="AAC65197">
    <property type="protein sequence ID" value="AAC65197"/>
    <property type="gene ID" value="TP_0207"/>
</dbReference>
<dbReference type="GeneID" id="93875995"/>
<dbReference type="KEGG" id="tpa:TP_0207"/>
<dbReference type="KEGG" id="tpw:TPANIC_0207"/>
<dbReference type="eggNOG" id="COG0200">
    <property type="taxonomic scope" value="Bacteria"/>
</dbReference>
<dbReference type="HOGENOM" id="CLU_055188_4_2_12"/>
<dbReference type="OrthoDB" id="9810293at2"/>
<dbReference type="Proteomes" id="UP000000811">
    <property type="component" value="Chromosome"/>
</dbReference>
<dbReference type="GO" id="GO:0022625">
    <property type="term" value="C:cytosolic large ribosomal subunit"/>
    <property type="evidence" value="ECO:0007669"/>
    <property type="project" value="TreeGrafter"/>
</dbReference>
<dbReference type="GO" id="GO:0019843">
    <property type="term" value="F:rRNA binding"/>
    <property type="evidence" value="ECO:0007669"/>
    <property type="project" value="UniProtKB-UniRule"/>
</dbReference>
<dbReference type="GO" id="GO:0003735">
    <property type="term" value="F:structural constituent of ribosome"/>
    <property type="evidence" value="ECO:0007669"/>
    <property type="project" value="InterPro"/>
</dbReference>
<dbReference type="GO" id="GO:0006412">
    <property type="term" value="P:translation"/>
    <property type="evidence" value="ECO:0007669"/>
    <property type="project" value="UniProtKB-UniRule"/>
</dbReference>
<dbReference type="Gene3D" id="3.100.10.10">
    <property type="match status" value="1"/>
</dbReference>
<dbReference type="HAMAP" id="MF_01341">
    <property type="entry name" value="Ribosomal_uL15"/>
    <property type="match status" value="1"/>
</dbReference>
<dbReference type="InterPro" id="IPR030878">
    <property type="entry name" value="Ribosomal_uL15"/>
</dbReference>
<dbReference type="InterPro" id="IPR021131">
    <property type="entry name" value="Ribosomal_uL15/eL18"/>
</dbReference>
<dbReference type="InterPro" id="IPR036227">
    <property type="entry name" value="Ribosomal_uL15/eL18_sf"/>
</dbReference>
<dbReference type="InterPro" id="IPR005749">
    <property type="entry name" value="Ribosomal_uL15_bac-type"/>
</dbReference>
<dbReference type="InterPro" id="IPR001196">
    <property type="entry name" value="Ribosomal_uL15_CS"/>
</dbReference>
<dbReference type="NCBIfam" id="TIGR01071">
    <property type="entry name" value="rplO_bact"/>
    <property type="match status" value="1"/>
</dbReference>
<dbReference type="PANTHER" id="PTHR12934">
    <property type="entry name" value="50S RIBOSOMAL PROTEIN L15"/>
    <property type="match status" value="1"/>
</dbReference>
<dbReference type="PANTHER" id="PTHR12934:SF11">
    <property type="entry name" value="LARGE RIBOSOMAL SUBUNIT PROTEIN UL15M"/>
    <property type="match status" value="1"/>
</dbReference>
<dbReference type="Pfam" id="PF00828">
    <property type="entry name" value="Ribosomal_L27A"/>
    <property type="match status" value="1"/>
</dbReference>
<dbReference type="SUPFAM" id="SSF52080">
    <property type="entry name" value="Ribosomal proteins L15p and L18e"/>
    <property type="match status" value="1"/>
</dbReference>
<dbReference type="PROSITE" id="PS00475">
    <property type="entry name" value="RIBOSOMAL_L15"/>
    <property type="match status" value="1"/>
</dbReference>
<reference key="1">
    <citation type="journal article" date="1998" name="Science">
        <title>Complete genome sequence of Treponema pallidum, the syphilis spirochete.</title>
        <authorList>
            <person name="Fraser C.M."/>
            <person name="Norris S.J."/>
            <person name="Weinstock G.M."/>
            <person name="White O."/>
            <person name="Sutton G.G."/>
            <person name="Dodson R.J."/>
            <person name="Gwinn M.L."/>
            <person name="Hickey E.K."/>
            <person name="Clayton R.A."/>
            <person name="Ketchum K.A."/>
            <person name="Sodergren E."/>
            <person name="Hardham J.M."/>
            <person name="McLeod M.P."/>
            <person name="Salzberg S.L."/>
            <person name="Peterson J.D."/>
            <person name="Khalak H.G."/>
            <person name="Richardson D.L."/>
            <person name="Howell J.K."/>
            <person name="Chidambaram M."/>
            <person name="Utterback T.R."/>
            <person name="McDonald L.A."/>
            <person name="Artiach P."/>
            <person name="Bowman C."/>
            <person name="Cotton M.D."/>
            <person name="Fujii C."/>
            <person name="Garland S.A."/>
            <person name="Hatch B."/>
            <person name="Horst K."/>
            <person name="Roberts K.M."/>
            <person name="Sandusky M."/>
            <person name="Weidman J.F."/>
            <person name="Smith H.O."/>
            <person name="Venter J.C."/>
        </authorList>
    </citation>
    <scope>NUCLEOTIDE SEQUENCE [LARGE SCALE GENOMIC DNA]</scope>
    <source>
        <strain>Nichols</strain>
    </source>
</reference>
<name>RL15_TREPA</name>
<evidence type="ECO:0000255" key="1">
    <source>
        <dbReference type="HAMAP-Rule" id="MF_01341"/>
    </source>
</evidence>
<evidence type="ECO:0000256" key="2">
    <source>
        <dbReference type="SAM" id="MobiDB-lite"/>
    </source>
</evidence>
<evidence type="ECO:0000305" key="3"/>
<protein>
    <recommendedName>
        <fullName evidence="1">Large ribosomal subunit protein uL15</fullName>
    </recommendedName>
    <alternativeName>
        <fullName evidence="3">50S ribosomal protein L15</fullName>
    </alternativeName>
</protein>
<organism>
    <name type="scientific">Treponema pallidum (strain Nichols)</name>
    <dbReference type="NCBI Taxonomy" id="243276"/>
    <lineage>
        <taxon>Bacteria</taxon>
        <taxon>Pseudomonadati</taxon>
        <taxon>Spirochaetota</taxon>
        <taxon>Spirochaetia</taxon>
        <taxon>Spirochaetales</taxon>
        <taxon>Treponemataceae</taxon>
        <taxon>Treponema</taxon>
    </lineage>
</organism>
<keyword id="KW-1185">Reference proteome</keyword>
<keyword id="KW-0687">Ribonucleoprotein</keyword>
<keyword id="KW-0689">Ribosomal protein</keyword>
<keyword id="KW-0694">RNA-binding</keyword>
<keyword id="KW-0699">rRNA-binding</keyword>
<proteinExistence type="inferred from homology"/>
<feature type="chain" id="PRO_0000104848" description="Large ribosomal subunit protein uL15">
    <location>
        <begin position="1"/>
        <end position="153"/>
    </location>
</feature>
<feature type="region of interest" description="Disordered" evidence="2">
    <location>
        <begin position="15"/>
        <end position="42"/>
    </location>
</feature>
<feature type="compositionally biased region" description="Gly residues" evidence="2">
    <location>
        <begin position="23"/>
        <end position="35"/>
    </location>
</feature>
<gene>
    <name evidence="1" type="primary">rplO</name>
    <name type="ordered locus">TP_0207</name>
</gene>